<keyword id="KW-0068">Autocatalytic cleavage</keyword>
<keyword id="KW-0227">DNA damage</keyword>
<keyword id="KW-0234">DNA repair</keyword>
<keyword id="KW-0235">DNA replication</keyword>
<keyword id="KW-0238">DNA-binding</keyword>
<keyword id="KW-0378">Hydrolase</keyword>
<keyword id="KW-1185">Reference proteome</keyword>
<keyword id="KW-0678">Repressor</keyword>
<keyword id="KW-0742">SOS response</keyword>
<keyword id="KW-0804">Transcription</keyword>
<keyword id="KW-0805">Transcription regulation</keyword>
<protein>
    <recommendedName>
        <fullName evidence="1">LexA repressor</fullName>
        <ecNumber evidence="1">3.4.21.88</ecNumber>
    </recommendedName>
</protein>
<accession>Q2YRR1</accession>
<sequence length="240" mass="26070">MLTRKQHELLLFIHERLKETGIPPSFDEMKEALDLASKSGIHRLITALEERGFIRRLPNRARALEVLRLPDSIAPGLSPQKKFAPSVIEGSLGKVASVQPVRPAPAPQNSEAPATVSVPVMGRIAAGVPISAIQNQTHMLSLPPEMIGAGEHYALEVKGDSMIDAGIFDGDTVIIKRGDTANPGEIVVALVDEEEATLKRFRREGASIALEAANPAYETRIFGPDRVHVQGKLVGLIRRY</sequence>
<proteinExistence type="inferred from homology"/>
<feature type="chain" id="PRO_1000001263" description="LexA repressor">
    <location>
        <begin position="1"/>
        <end position="240"/>
    </location>
</feature>
<feature type="DNA-binding region" description="H-T-H motif" evidence="1">
    <location>
        <begin position="26"/>
        <end position="46"/>
    </location>
</feature>
<feature type="active site" description="For autocatalytic cleavage activity" evidence="1">
    <location>
        <position position="161"/>
    </location>
</feature>
<feature type="active site" description="For autocatalytic cleavage activity" evidence="1">
    <location>
        <position position="199"/>
    </location>
</feature>
<feature type="site" description="Cleavage; by autolysis" evidence="1">
    <location>
        <begin position="126"/>
        <end position="127"/>
    </location>
</feature>
<comment type="function">
    <text evidence="1">Represses a number of genes involved in the response to DNA damage (SOS response), including recA and lexA. In the presence of single-stranded DNA, RecA interacts with LexA causing an autocatalytic cleavage which disrupts the DNA-binding part of LexA, leading to derepression of the SOS regulon and eventually DNA repair.</text>
</comment>
<comment type="catalytic activity">
    <reaction evidence="1">
        <text>Hydrolysis of Ala-|-Gly bond in repressor LexA.</text>
        <dbReference type="EC" id="3.4.21.88"/>
    </reaction>
</comment>
<comment type="activity regulation">
    <text evidence="2">May be constitutively autocleaved; RecA is constitutively activated in this strain, leading to continuous transcription of recA.</text>
</comment>
<comment type="subunit">
    <text evidence="1">Homodimer.</text>
</comment>
<comment type="similarity">
    <text evidence="1">Belongs to the peptidase S24 family.</text>
</comment>
<reference key="1">
    <citation type="journal article" date="2005" name="Infect. Immun.">
        <title>Whole-genome analyses of speciation events in pathogenic Brucellae.</title>
        <authorList>
            <person name="Chain P.S."/>
            <person name="Comerci D.J."/>
            <person name="Tolmasky M.E."/>
            <person name="Larimer F.W."/>
            <person name="Malfatti S.A."/>
            <person name="Vergez L.M."/>
            <person name="Aguero F."/>
            <person name="Land M.L."/>
            <person name="Ugalde R.A."/>
            <person name="Garcia E."/>
        </authorList>
    </citation>
    <scope>NUCLEOTIDE SEQUENCE [LARGE SCALE GENOMIC DNA]</scope>
    <source>
        <strain>2308</strain>
    </source>
</reference>
<reference key="2">
    <citation type="journal article" date="2006" name="J. Bacteriol.">
        <title>RecA and RadA proteins of Brucella abortus do not perform overlapping protective DNA repair functions following oxidative burst.</title>
        <authorList>
            <person name="Roux C.M."/>
            <person name="Booth N.J."/>
            <person name="Bellaire B.H."/>
            <person name="Gee J.M."/>
            <person name="Roop R.M. II"/>
            <person name="Kovach M.E."/>
            <person name="Tsolis R.M."/>
            <person name="Elzer P.H."/>
            <person name="Ennis D.G."/>
        </authorList>
    </citation>
    <scope>POSSIBLE ACTIVITY REGULATION</scope>
    <source>
        <strain>2308</strain>
    </source>
</reference>
<organism>
    <name type="scientific">Brucella abortus (strain 2308)</name>
    <dbReference type="NCBI Taxonomy" id="359391"/>
    <lineage>
        <taxon>Bacteria</taxon>
        <taxon>Pseudomonadati</taxon>
        <taxon>Pseudomonadota</taxon>
        <taxon>Alphaproteobacteria</taxon>
        <taxon>Hyphomicrobiales</taxon>
        <taxon>Brucellaceae</taxon>
        <taxon>Brucella/Ochrobactrum group</taxon>
        <taxon>Brucella</taxon>
    </lineage>
</organism>
<evidence type="ECO:0000255" key="1">
    <source>
        <dbReference type="HAMAP-Rule" id="MF_00015"/>
    </source>
</evidence>
<evidence type="ECO:0000305" key="2">
    <source>
    </source>
</evidence>
<gene>
    <name evidence="1" type="primary">lexA</name>
    <name type="ordered locus">BAB1_1167</name>
</gene>
<dbReference type="EC" id="3.4.21.88" evidence="1"/>
<dbReference type="EMBL" id="AM040264">
    <property type="protein sequence ID" value="CAJ11123.1"/>
    <property type="molecule type" value="Genomic_DNA"/>
</dbReference>
<dbReference type="RefSeq" id="WP_002964272.1">
    <property type="nucleotide sequence ID" value="NZ_KN046823.1"/>
</dbReference>
<dbReference type="SMR" id="Q2YRR1"/>
<dbReference type="STRING" id="359391.BAB1_1167"/>
<dbReference type="MEROPS" id="S24.001"/>
<dbReference type="GeneID" id="97533604"/>
<dbReference type="KEGG" id="bmf:BAB1_1167"/>
<dbReference type="PATRIC" id="fig|359391.11.peg.65"/>
<dbReference type="HOGENOM" id="CLU_066192_45_2_5"/>
<dbReference type="PhylomeDB" id="Q2YRR1"/>
<dbReference type="Proteomes" id="UP000002719">
    <property type="component" value="Chromosome I"/>
</dbReference>
<dbReference type="GO" id="GO:0003677">
    <property type="term" value="F:DNA binding"/>
    <property type="evidence" value="ECO:0007669"/>
    <property type="project" value="UniProtKB-UniRule"/>
</dbReference>
<dbReference type="GO" id="GO:0004252">
    <property type="term" value="F:serine-type endopeptidase activity"/>
    <property type="evidence" value="ECO:0007669"/>
    <property type="project" value="UniProtKB-UniRule"/>
</dbReference>
<dbReference type="GO" id="GO:0006281">
    <property type="term" value="P:DNA repair"/>
    <property type="evidence" value="ECO:0007669"/>
    <property type="project" value="UniProtKB-UniRule"/>
</dbReference>
<dbReference type="GO" id="GO:0006260">
    <property type="term" value="P:DNA replication"/>
    <property type="evidence" value="ECO:0007669"/>
    <property type="project" value="UniProtKB-UniRule"/>
</dbReference>
<dbReference type="GO" id="GO:0045892">
    <property type="term" value="P:negative regulation of DNA-templated transcription"/>
    <property type="evidence" value="ECO:0007669"/>
    <property type="project" value="UniProtKB-UniRule"/>
</dbReference>
<dbReference type="GO" id="GO:0006508">
    <property type="term" value="P:proteolysis"/>
    <property type="evidence" value="ECO:0007669"/>
    <property type="project" value="InterPro"/>
</dbReference>
<dbReference type="GO" id="GO:0009432">
    <property type="term" value="P:SOS response"/>
    <property type="evidence" value="ECO:0007669"/>
    <property type="project" value="UniProtKB-UniRule"/>
</dbReference>
<dbReference type="CDD" id="cd06529">
    <property type="entry name" value="S24_LexA-like"/>
    <property type="match status" value="1"/>
</dbReference>
<dbReference type="FunFam" id="1.10.10.10:FF:000102">
    <property type="entry name" value="LexA repressor"/>
    <property type="match status" value="1"/>
</dbReference>
<dbReference type="FunFam" id="2.10.109.10:FF:000001">
    <property type="entry name" value="LexA repressor"/>
    <property type="match status" value="1"/>
</dbReference>
<dbReference type="Gene3D" id="2.10.109.10">
    <property type="entry name" value="Umud Fragment, subunit A"/>
    <property type="match status" value="1"/>
</dbReference>
<dbReference type="Gene3D" id="1.10.10.10">
    <property type="entry name" value="Winged helix-like DNA-binding domain superfamily/Winged helix DNA-binding domain"/>
    <property type="match status" value="1"/>
</dbReference>
<dbReference type="HAMAP" id="MF_00015">
    <property type="entry name" value="LexA"/>
    <property type="match status" value="1"/>
</dbReference>
<dbReference type="InterPro" id="IPR006200">
    <property type="entry name" value="LexA"/>
</dbReference>
<dbReference type="InterPro" id="IPR039418">
    <property type="entry name" value="LexA-like"/>
</dbReference>
<dbReference type="InterPro" id="IPR036286">
    <property type="entry name" value="LexA/Signal_pep-like_sf"/>
</dbReference>
<dbReference type="InterPro" id="IPR006199">
    <property type="entry name" value="LexA_DNA-bd_dom"/>
</dbReference>
<dbReference type="InterPro" id="IPR050077">
    <property type="entry name" value="LexA_repressor"/>
</dbReference>
<dbReference type="InterPro" id="IPR006197">
    <property type="entry name" value="Peptidase_S24_LexA"/>
</dbReference>
<dbReference type="InterPro" id="IPR015927">
    <property type="entry name" value="Peptidase_S24_S26A/B/C"/>
</dbReference>
<dbReference type="InterPro" id="IPR036388">
    <property type="entry name" value="WH-like_DNA-bd_sf"/>
</dbReference>
<dbReference type="InterPro" id="IPR036390">
    <property type="entry name" value="WH_DNA-bd_sf"/>
</dbReference>
<dbReference type="NCBIfam" id="TIGR00498">
    <property type="entry name" value="lexA"/>
    <property type="match status" value="1"/>
</dbReference>
<dbReference type="PANTHER" id="PTHR33516">
    <property type="entry name" value="LEXA REPRESSOR"/>
    <property type="match status" value="1"/>
</dbReference>
<dbReference type="PANTHER" id="PTHR33516:SF2">
    <property type="entry name" value="LEXA REPRESSOR-RELATED"/>
    <property type="match status" value="1"/>
</dbReference>
<dbReference type="Pfam" id="PF01726">
    <property type="entry name" value="LexA_DNA_bind"/>
    <property type="match status" value="1"/>
</dbReference>
<dbReference type="Pfam" id="PF00717">
    <property type="entry name" value="Peptidase_S24"/>
    <property type="match status" value="1"/>
</dbReference>
<dbReference type="PRINTS" id="PR00726">
    <property type="entry name" value="LEXASERPTASE"/>
</dbReference>
<dbReference type="SUPFAM" id="SSF51306">
    <property type="entry name" value="LexA/Signal peptidase"/>
    <property type="match status" value="1"/>
</dbReference>
<dbReference type="SUPFAM" id="SSF46785">
    <property type="entry name" value="Winged helix' DNA-binding domain"/>
    <property type="match status" value="1"/>
</dbReference>
<name>LEXA_BRUA2</name>